<accession>P34164</accession>
<accession>D6VTU7</accession>
<comment type="function">
    <text evidence="2 5">Beta subunit of the SNF1 kinase complex, which is required for transcriptional, metabolic, and developmental adaptations in response to glucose limitation. Has a structural role, mediating heterotrimer formation, and a regulatory role, defining carbon source-regulated subcellular location and substrate specificity of the SNF1 kinase complex. Involved in the regulation of aging. Acts as a negative regulator of nuclear SNF1 activity in young cells by sequestering its activating gamma subunit at the plasma membrane.</text>
</comment>
<comment type="subunit">
    <text evidence="4 7 8 9 10">Component of the SNF1 kinase complex, a heterotrimeric complex composed of the catalytic alpha subunit SNF1, one of the three related beta subunits SIP1, SIP2 or GAL83, and the regulatory gamma subunit SNF4. The beta subunit serves as a bridge between the catalytic and the regulatory subunit. Interacts (via KIS domain) with SNF1. Interacts (via ASC domain) with SNF4.</text>
</comment>
<comment type="interaction">
    <interactant intactId="EBI-17187">
        <id>P34164</id>
    </interactant>
    <interactant intactId="EBI-17516">
        <id>P06782</id>
        <label>SNF1</label>
    </interactant>
    <organismsDiffer>false</organismsDiffer>
    <experiments>12</experiments>
</comment>
<comment type="interaction">
    <interactant intactId="EBI-17187">
        <id>P34164</id>
    </interactant>
    <interactant intactId="EBI-17537">
        <id>P12904</id>
        <label>SNF4</label>
    </interactant>
    <organismsDiffer>false</organismsDiffer>
    <experiments>10</experiments>
</comment>
<comment type="subcellular location">
    <subcellularLocation>
        <location evidence="3">Cytoplasm</location>
    </subcellularLocation>
    <subcellularLocation>
        <location evidence="5">Cell membrane</location>
        <topology evidence="5">Peripheral membrane protein</topology>
        <orientation evidence="5">Cytoplasmic side</orientation>
    </subcellularLocation>
    <text evidence="5">Resides in the cytosol during growth in glucose. Excluded from the nucleus. There is an age-associated shift in localization from the plasma membrane to the cytoplasm.</text>
</comment>
<comment type="induction">
    <text evidence="3">Induced upon shift to nonfermentable carbon sources.</text>
</comment>
<comment type="PTM">
    <text evidence="9">Phosphorylated by SNF1 in vitro.</text>
</comment>
<comment type="miscellaneous">
    <text evidence="6">Present with 300 molecules/cell in log phase SD medium.</text>
</comment>
<comment type="similarity">
    <text evidence="11">Belongs to the 5'-AMP-activated protein kinase beta subunit family.</text>
</comment>
<reference key="1">
    <citation type="submission" date="1992-07" db="EMBL/GenBank/DDBJ databases">
        <title>Suppressors of yeast RNA polymerase II mutations belong to a family of gene products that interact with a protein kinase.</title>
        <authorList>
            <person name="Drebot M.A."/>
            <person name="Jansma D."/>
            <person name="Himmelfarb H.J."/>
            <person name="Friesen J.D."/>
        </authorList>
    </citation>
    <scope>NUCLEOTIDE SEQUENCE [GENOMIC DNA]</scope>
</reference>
<reference key="2">
    <citation type="journal article" date="1994" name="EMBO J.">
        <title>A family of proteins containing a conserved domain that mediates interaction with the yeast SNF1 protein kinase complex.</title>
        <authorList>
            <person name="Yang X."/>
            <person name="Jiang R."/>
            <person name="Carlson M."/>
        </authorList>
    </citation>
    <scope>NUCLEOTIDE SEQUENCE [GENOMIC DNA]</scope>
    <scope>INTERACTION WITH SNF1</scope>
    <scope>PHOSPHORYLATION</scope>
    <source>
        <strain>ATCC 204508 / S288c</strain>
    </source>
</reference>
<reference key="3">
    <citation type="journal article" date="1997" name="Yeast">
        <title>Analysis of 21.7 kb DNA sequence from the left arm of chromosome VII reveals 11 open reading frames: two correspond to new genes.</title>
        <authorList>
            <person name="Feuermann M."/>
            <person name="Simeonava L."/>
            <person name="Souciet J.-L."/>
            <person name="Potier S."/>
        </authorList>
    </citation>
    <scope>NUCLEOTIDE SEQUENCE [GENOMIC DNA]</scope>
</reference>
<reference key="4">
    <citation type="journal article" date="1997" name="Nature">
        <title>The nucleotide sequence of Saccharomyces cerevisiae chromosome VII.</title>
        <authorList>
            <person name="Tettelin H."/>
            <person name="Agostoni-Carbone M.L."/>
            <person name="Albermann K."/>
            <person name="Albers M."/>
            <person name="Arroyo J."/>
            <person name="Backes U."/>
            <person name="Barreiros T."/>
            <person name="Bertani I."/>
            <person name="Bjourson A.J."/>
            <person name="Brueckner M."/>
            <person name="Bruschi C.V."/>
            <person name="Carignani G."/>
            <person name="Castagnoli L."/>
            <person name="Cerdan E."/>
            <person name="Clemente M.L."/>
            <person name="Coblenz A."/>
            <person name="Coglievina M."/>
            <person name="Coissac E."/>
            <person name="Defoor E."/>
            <person name="Del Bino S."/>
            <person name="Delius H."/>
            <person name="Delneri D."/>
            <person name="de Wergifosse P."/>
            <person name="Dujon B."/>
            <person name="Durand P."/>
            <person name="Entian K.-D."/>
            <person name="Eraso P."/>
            <person name="Escribano V."/>
            <person name="Fabiani L."/>
            <person name="Fartmann B."/>
            <person name="Feroli F."/>
            <person name="Feuermann M."/>
            <person name="Frontali L."/>
            <person name="Garcia-Gonzalez M."/>
            <person name="Garcia-Saez M.I."/>
            <person name="Goffeau A."/>
            <person name="Guerreiro P."/>
            <person name="Hani J."/>
            <person name="Hansen M."/>
            <person name="Hebling U."/>
            <person name="Hernandez K."/>
            <person name="Heumann K."/>
            <person name="Hilger F."/>
            <person name="Hofmann B."/>
            <person name="Indge K.J."/>
            <person name="James C.M."/>
            <person name="Klima R."/>
            <person name="Koetter P."/>
            <person name="Kramer B."/>
            <person name="Kramer W."/>
            <person name="Lauquin G."/>
            <person name="Leuther H."/>
            <person name="Louis E.J."/>
            <person name="Maillier E."/>
            <person name="Marconi A."/>
            <person name="Martegani E."/>
            <person name="Mazon M.J."/>
            <person name="Mazzoni C."/>
            <person name="McReynolds A.D.K."/>
            <person name="Melchioretto P."/>
            <person name="Mewes H.-W."/>
            <person name="Minenkova O."/>
            <person name="Mueller-Auer S."/>
            <person name="Nawrocki A."/>
            <person name="Netter P."/>
            <person name="Neu R."/>
            <person name="Nombela C."/>
            <person name="Oliver S.G."/>
            <person name="Panzeri L."/>
            <person name="Paoluzi S."/>
            <person name="Plevani P."/>
            <person name="Portetelle D."/>
            <person name="Portillo F."/>
            <person name="Potier S."/>
            <person name="Purnelle B."/>
            <person name="Rieger M."/>
            <person name="Riles L."/>
            <person name="Rinaldi T."/>
            <person name="Robben J."/>
            <person name="Rodrigues-Pousada C."/>
            <person name="Rodriguez-Belmonte E."/>
            <person name="Rodriguez-Torres A.M."/>
            <person name="Rose M."/>
            <person name="Ruzzi M."/>
            <person name="Saliola M."/>
            <person name="Sanchez-Perez M."/>
            <person name="Schaefer B."/>
            <person name="Schaefer M."/>
            <person name="Scharfe M."/>
            <person name="Schmidheini T."/>
            <person name="Schreer A."/>
            <person name="Skala J."/>
            <person name="Souciet J.-L."/>
            <person name="Steensma H.Y."/>
            <person name="Talla E."/>
            <person name="Thierry A."/>
            <person name="Vandenbol M."/>
            <person name="van der Aart Q.J.M."/>
            <person name="Van Dyck L."/>
            <person name="Vanoni M."/>
            <person name="Verhasselt P."/>
            <person name="Voet M."/>
            <person name="Volckaert G."/>
            <person name="Wambutt R."/>
            <person name="Watson M.D."/>
            <person name="Weber N."/>
            <person name="Wedler E."/>
            <person name="Wedler H."/>
            <person name="Wipfli P."/>
            <person name="Wolf K."/>
            <person name="Wright L.F."/>
            <person name="Zaccaria P."/>
            <person name="Zimmermann M."/>
            <person name="Zollner A."/>
            <person name="Kleine K."/>
        </authorList>
    </citation>
    <scope>NUCLEOTIDE SEQUENCE [LARGE SCALE GENOMIC DNA]</scope>
    <source>
        <strain>ATCC 204508 / S288c</strain>
    </source>
</reference>
<reference key="5">
    <citation type="journal article" date="2014" name="G3 (Bethesda)">
        <title>The reference genome sequence of Saccharomyces cerevisiae: Then and now.</title>
        <authorList>
            <person name="Engel S.R."/>
            <person name="Dietrich F.S."/>
            <person name="Fisk D.G."/>
            <person name="Binkley G."/>
            <person name="Balakrishnan R."/>
            <person name="Costanzo M.C."/>
            <person name="Dwight S.S."/>
            <person name="Hitz B.C."/>
            <person name="Karra K."/>
            <person name="Nash R.S."/>
            <person name="Weng S."/>
            <person name="Wong E.D."/>
            <person name="Lloyd P."/>
            <person name="Skrzypek M.S."/>
            <person name="Miyasato S.R."/>
            <person name="Simison M."/>
            <person name="Cherry J.M."/>
        </authorList>
    </citation>
    <scope>GENOME REANNOTATION</scope>
    <source>
        <strain>ATCC 204508 / S288c</strain>
    </source>
</reference>
<reference key="6">
    <citation type="journal article" date="1996" name="Yeast">
        <title>Lambda clone B22 contains a 7676 bp genomic fragment of Saccharomyces cerevisiae chromosome VII spanning the VAM7-SPM2 intergenic region and containing three novel transcribed open reading frames.</title>
        <authorList>
            <person name="Kail M."/>
            <person name="Juettner E."/>
            <person name="Vaux D."/>
        </authorList>
    </citation>
    <scope>NUCLEOTIDE SEQUENCE [GENOMIC DNA] OF 1-284</scope>
    <source>
        <strain>ATCC 204508 / S288c</strain>
    </source>
</reference>
<reference key="7">
    <citation type="journal article" date="1997" name="Mol. Cell. Biol.">
        <title>The Snf1 protein kinase and its activating subunit, Snf4, interact with distinct domains of the Sip1/Sip2/Gal83 component in the kinase complex.</title>
        <authorList>
            <person name="Jiang R."/>
            <person name="Carlson M."/>
        </authorList>
    </citation>
    <scope>INTERACTION WITH SNF1 AND SNF4</scope>
</reference>
<reference key="8">
    <citation type="journal article" date="2000" name="EMBO J.">
        <title>beta-subunits of Snf1 kinase are required for kinase function and substrate definition.</title>
        <authorList>
            <person name="Schmidt M.C."/>
            <person name="McCartney R.R."/>
        </authorList>
    </citation>
    <scope>FUNCTION</scope>
</reference>
<reference key="9">
    <citation type="journal article" date="2001" name="Genes Dev.">
        <title>Subcellular localization of the Snf1 kinase is regulated by specific beta subunits and a novel glucose signaling mechanism.</title>
        <authorList>
            <person name="Vincent O."/>
            <person name="Townley R."/>
            <person name="Kuchin S."/>
            <person name="Carlson M."/>
        </authorList>
    </citation>
    <scope>SUBCELLULAR LOCATION</scope>
    <scope>INDUCTION</scope>
</reference>
<reference key="10">
    <citation type="journal article" date="2002" name="J. Biol. Chem.">
        <title>Purification and characterization of Snf1 kinase complexes containing a defined beta subunit composition.</title>
        <authorList>
            <person name="Nath N."/>
            <person name="McCartney R.R."/>
            <person name="Schmidt M.C."/>
        </authorList>
    </citation>
    <scope>IDENTIFICATION IN SNF1 KINASE COMPLEX</scope>
</reference>
<reference key="11">
    <citation type="journal article" date="2003" name="J. Biol. Chem.">
        <title>Sip2, an N-myristoylated beta subunit of Snf1 kinase, regulates aging in Saccharomyces cerevisiae by affecting cellular histone kinase activity, recombination at rDNA loci, and silencing.</title>
        <authorList>
            <person name="Lin S.S."/>
            <person name="Manchester J.K."/>
            <person name="Gordon J.I."/>
        </authorList>
    </citation>
    <scope>FUNCTION</scope>
    <scope>MYRISTOYLATION AT GLY-2</scope>
    <scope>SUBCELLULAR LOCATION</scope>
    <scope>MUTAGENESIS OF GLY-2</scope>
</reference>
<reference key="12">
    <citation type="journal article" date="2003" name="Nature">
        <title>Global analysis of protein expression in yeast.</title>
        <authorList>
            <person name="Ghaemmaghami S."/>
            <person name="Huh W.-K."/>
            <person name="Bower K."/>
            <person name="Howson R.W."/>
            <person name="Belle A."/>
            <person name="Dephoure N."/>
            <person name="O'Shea E.K."/>
            <person name="Weissman J.S."/>
        </authorList>
    </citation>
    <scope>LEVEL OF PROTEIN EXPRESSION [LARGE SCALE ANALYSIS]</scope>
</reference>
<reference key="13">
    <citation type="journal article" date="2007" name="Proc. Natl. Acad. Sci. U.S.A.">
        <title>Analysis of phosphorylation sites on proteins from Saccharomyces cerevisiae by electron transfer dissociation (ETD) mass spectrometry.</title>
        <authorList>
            <person name="Chi A."/>
            <person name="Huttenhower C."/>
            <person name="Geer L.Y."/>
            <person name="Coon J.J."/>
            <person name="Syka J.E.P."/>
            <person name="Bai D.L."/>
            <person name="Shabanowitz J."/>
            <person name="Burke D.J."/>
            <person name="Troyanskaya O.G."/>
            <person name="Hunt D.F."/>
        </authorList>
    </citation>
    <scope>IDENTIFICATION BY MASS SPECTROMETRY [LARGE SCALE ANALYSIS]</scope>
</reference>
<reference key="14">
    <citation type="journal article" date="2009" name="Science">
        <title>Global analysis of Cdk1 substrate phosphorylation sites provides insights into evolution.</title>
        <authorList>
            <person name="Holt L.J."/>
            <person name="Tuch B.B."/>
            <person name="Villen J."/>
            <person name="Johnson A.D."/>
            <person name="Gygi S.P."/>
            <person name="Morgan D.O."/>
        </authorList>
    </citation>
    <scope>PHOSPHORYLATION [LARGE SCALE ANALYSIS] AT SER-66 AND SER-298</scope>
    <scope>IDENTIFICATION BY MASS SPECTROMETRY [LARGE SCALE ANALYSIS]</scope>
</reference>
<reference key="15">
    <citation type="journal article" date="2007" name="Nature">
        <title>Crystal structure of the heterotrimer core of Saccharomyces cerevisiae AMPK homologue SNF1.</title>
        <authorList>
            <person name="Amodeo G.A."/>
            <person name="Rudolph M.J."/>
            <person name="Tong L."/>
        </authorList>
    </citation>
    <scope>X-RAY CRYSTALLOGRAPHY (2.6 ANGSTROMS) OF 161-412 IN COMPLEX WITH SNF1 AND SNF4</scope>
</reference>
<reference key="16">
    <citation type="journal article" date="2011" name="Cell Metab.">
        <title>ADP regulates SNF1, the Saccharomyces cerevisiae homolog of AMP-activated protein kinase.</title>
        <authorList>
            <person name="Mayer F.V."/>
            <person name="Heath R."/>
            <person name="Underwood E."/>
            <person name="Sanders M.J."/>
            <person name="Carmena D."/>
            <person name="McCartney R.R."/>
            <person name="Leiper F.C."/>
            <person name="Xiao B."/>
            <person name="Jing C."/>
            <person name="Walker P.A."/>
            <person name="Haire L.F."/>
            <person name="Ogrodowicz R."/>
            <person name="Martin S.R."/>
            <person name="Schmidt M.C."/>
            <person name="Gamblin S.J."/>
            <person name="Carling D."/>
        </authorList>
    </citation>
    <scope>X-RAY CRYSTALLOGRAPHY (2.30 ANGSTROMS) OF 304-415 IN COMPLEX WITH SNF1 AND SNF4</scope>
</reference>
<keyword id="KW-0002">3D-structure</keyword>
<keyword id="KW-1003">Cell membrane</keyword>
<keyword id="KW-0963">Cytoplasm</keyword>
<keyword id="KW-0449">Lipoprotein</keyword>
<keyword id="KW-0472">Membrane</keyword>
<keyword id="KW-0519">Myristate</keyword>
<keyword id="KW-0597">Phosphoprotein</keyword>
<keyword id="KW-1185">Reference proteome</keyword>
<evidence type="ECO:0000256" key="1">
    <source>
        <dbReference type="SAM" id="MobiDB-lite"/>
    </source>
</evidence>
<evidence type="ECO:0000269" key="2">
    <source>
    </source>
</evidence>
<evidence type="ECO:0000269" key="3">
    <source>
    </source>
</evidence>
<evidence type="ECO:0000269" key="4">
    <source>
    </source>
</evidence>
<evidence type="ECO:0000269" key="5">
    <source>
    </source>
</evidence>
<evidence type="ECO:0000269" key="6">
    <source>
    </source>
</evidence>
<evidence type="ECO:0000269" key="7">
    <source>
    </source>
</evidence>
<evidence type="ECO:0000269" key="8">
    <source>
    </source>
</evidence>
<evidence type="ECO:0000269" key="9">
    <source>
    </source>
</evidence>
<evidence type="ECO:0000269" key="10">
    <source>
    </source>
</evidence>
<evidence type="ECO:0000305" key="11"/>
<evidence type="ECO:0007744" key="12">
    <source>
    </source>
</evidence>
<evidence type="ECO:0007829" key="13">
    <source>
        <dbReference type="PDB" id="2QLV"/>
    </source>
</evidence>
<evidence type="ECO:0007829" key="14">
    <source>
        <dbReference type="PDB" id="3T4N"/>
    </source>
</evidence>
<evidence type="ECO:0007829" key="15">
    <source>
        <dbReference type="PDB" id="3TDH"/>
    </source>
</evidence>
<sequence>MGTTTSHPAQKKQTTKKCRAPIMSDVREKPSNAQGCEPQEMDAVSKKVTELSLNKCSDSQDAGQPSREGSITKKKSTLLLRDEDEPTMPKLSVMETAVDTDSGSSSTSDDEEGDIIAQTTEPKQDASPDDDRSGHSSPREEGQQQIRAKEASGGPSEIKSSLMVPVEIRWQQGGSKVYVTGSFTKWRKMIGLIPDSDNNGSFHVKLRLLPGTHRFRFIVDNELRVSDFLPTATDQMGNFVNYIEVRQPEKNPTNEKIRSKEADSMRPPTSDRSSIALQIGKDPDDFGDGYTRFHEDLSPRPPLEYTTDIPAVFTDPSVMERYYYTLDRQQSNTDTSWLTPPQLPPQLENVILNKYYATQDQFNENNSGALPIPNHVVLNHLVTSSIKHNTLCVASIVRYKQKYVTQILYTPIESS</sequence>
<proteinExistence type="evidence at protein level"/>
<dbReference type="EMBL" id="Z14128">
    <property type="protein sequence ID" value="CAA78503.1"/>
    <property type="molecule type" value="Genomic_DNA"/>
</dbReference>
<dbReference type="EMBL" id="L31592">
    <property type="protein sequence ID" value="AAC37420.1"/>
    <property type="molecule type" value="Genomic_DNA"/>
</dbReference>
<dbReference type="EMBL" id="Z72730">
    <property type="protein sequence ID" value="CAA96922.1"/>
    <property type="molecule type" value="Genomic_DNA"/>
</dbReference>
<dbReference type="EMBL" id="U33754">
    <property type="protein sequence ID" value="AAC49497.1"/>
    <property type="molecule type" value="Genomic_DNA"/>
</dbReference>
<dbReference type="EMBL" id="BK006941">
    <property type="protein sequence ID" value="DAA07908.1"/>
    <property type="molecule type" value="Genomic_DNA"/>
</dbReference>
<dbReference type="PIR" id="S51792">
    <property type="entry name" value="S51792"/>
</dbReference>
<dbReference type="RefSeq" id="NP_011307.1">
    <property type="nucleotide sequence ID" value="NM_001181073.2"/>
</dbReference>
<dbReference type="PDB" id="2QLV">
    <property type="method" value="X-ray"/>
    <property type="resolution" value="2.60 A"/>
    <property type="chains" value="B/E=161-412"/>
</dbReference>
<dbReference type="PDB" id="3T4N">
    <property type="method" value="X-ray"/>
    <property type="resolution" value="2.30 A"/>
    <property type="chains" value="B=304-415"/>
</dbReference>
<dbReference type="PDB" id="3TDH">
    <property type="method" value="X-ray"/>
    <property type="resolution" value="2.30 A"/>
    <property type="chains" value="B=304-415"/>
</dbReference>
<dbReference type="PDB" id="3TE5">
    <property type="method" value="X-ray"/>
    <property type="resolution" value="2.50 A"/>
    <property type="chains" value="B=304-415"/>
</dbReference>
<dbReference type="PDBsum" id="2QLV"/>
<dbReference type="PDBsum" id="3T4N"/>
<dbReference type="PDBsum" id="3TDH"/>
<dbReference type="PDBsum" id="3TE5"/>
<dbReference type="SMR" id="P34164"/>
<dbReference type="BioGRID" id="33048">
    <property type="interactions" value="165"/>
</dbReference>
<dbReference type="ComplexPortal" id="CPX-2800">
    <property type="entry name" value="Snf1 protein kinase complex variant SIP2"/>
</dbReference>
<dbReference type="DIP" id="DIP-865N"/>
<dbReference type="FunCoup" id="P34164">
    <property type="interactions" value="493"/>
</dbReference>
<dbReference type="IntAct" id="P34164">
    <property type="interactions" value="40"/>
</dbReference>
<dbReference type="MINT" id="P34164"/>
<dbReference type="STRING" id="4932.YGL208W"/>
<dbReference type="CAZy" id="CBM48">
    <property type="family name" value="Carbohydrate-Binding Module Family 48"/>
</dbReference>
<dbReference type="iPTMnet" id="P34164"/>
<dbReference type="PaxDb" id="4932-YGL208W"/>
<dbReference type="PeptideAtlas" id="P34164"/>
<dbReference type="EnsemblFungi" id="YGL208W_mRNA">
    <property type="protein sequence ID" value="YGL208W"/>
    <property type="gene ID" value="YGL208W"/>
</dbReference>
<dbReference type="GeneID" id="852664"/>
<dbReference type="KEGG" id="sce:YGL208W"/>
<dbReference type="AGR" id="SGD:S000003176"/>
<dbReference type="SGD" id="S000003176">
    <property type="gene designation" value="SIP2"/>
</dbReference>
<dbReference type="VEuPathDB" id="FungiDB:YGL208W"/>
<dbReference type="eggNOG" id="KOG1616">
    <property type="taxonomic scope" value="Eukaryota"/>
</dbReference>
<dbReference type="GeneTree" id="ENSGT00940000176367"/>
<dbReference type="HOGENOM" id="CLU_033562_1_0_1"/>
<dbReference type="InParanoid" id="P34164"/>
<dbReference type="OMA" id="TRFHEDL"/>
<dbReference type="OrthoDB" id="531008at2759"/>
<dbReference type="BioCyc" id="YEAST:G3O-30685-MONOMER"/>
<dbReference type="BRENDA" id="2.7.11.31">
    <property type="organism ID" value="984"/>
</dbReference>
<dbReference type="Reactome" id="R-SCE-1632852">
    <property type="pathway name" value="Macroautophagy"/>
</dbReference>
<dbReference type="Reactome" id="R-SCE-163680">
    <property type="pathway name" value="AMPK inhibits chREBP transcriptional activation activity"/>
</dbReference>
<dbReference type="Reactome" id="R-SCE-200425">
    <property type="pathway name" value="Carnitine shuttle"/>
</dbReference>
<dbReference type="Reactome" id="R-SCE-380972">
    <property type="pathway name" value="Energy dependent regulation of mTOR by LKB1-AMPK"/>
</dbReference>
<dbReference type="BioGRID-ORCS" id="852664">
    <property type="hits" value="6 hits in 10 CRISPR screens"/>
</dbReference>
<dbReference type="EvolutionaryTrace" id="P34164"/>
<dbReference type="PRO" id="PR:P34164"/>
<dbReference type="Proteomes" id="UP000002311">
    <property type="component" value="Chromosome VII"/>
</dbReference>
<dbReference type="RNAct" id="P34164">
    <property type="molecule type" value="protein"/>
</dbReference>
<dbReference type="GO" id="GO:0005737">
    <property type="term" value="C:cytoplasm"/>
    <property type="evidence" value="ECO:0000314"/>
    <property type="project" value="SGD"/>
</dbReference>
<dbReference type="GO" id="GO:0031588">
    <property type="term" value="C:nucleotide-activated protein kinase complex"/>
    <property type="evidence" value="ECO:0000314"/>
    <property type="project" value="SGD"/>
</dbReference>
<dbReference type="GO" id="GO:0005634">
    <property type="term" value="C:nucleus"/>
    <property type="evidence" value="ECO:0000318"/>
    <property type="project" value="GO_Central"/>
</dbReference>
<dbReference type="GO" id="GO:0005886">
    <property type="term" value="C:plasma membrane"/>
    <property type="evidence" value="ECO:0000314"/>
    <property type="project" value="SGD"/>
</dbReference>
<dbReference type="GO" id="GO:0140767">
    <property type="term" value="F:enzyme-substrate adaptor activity"/>
    <property type="evidence" value="ECO:0000316"/>
    <property type="project" value="GO_Central"/>
</dbReference>
<dbReference type="GO" id="GO:0019901">
    <property type="term" value="F:protein kinase binding"/>
    <property type="evidence" value="ECO:0000318"/>
    <property type="project" value="GO_Central"/>
</dbReference>
<dbReference type="GO" id="GO:0042149">
    <property type="term" value="P:cellular response to glucose starvation"/>
    <property type="evidence" value="ECO:0000315"/>
    <property type="project" value="SGD"/>
</dbReference>
<dbReference type="GO" id="GO:0030447">
    <property type="term" value="P:filamentous growth"/>
    <property type="evidence" value="ECO:0000315"/>
    <property type="project" value="ComplexPortal"/>
</dbReference>
<dbReference type="GO" id="GO:0001403">
    <property type="term" value="P:invasive growth in response to glucose limitation"/>
    <property type="evidence" value="ECO:0000316"/>
    <property type="project" value="SGD"/>
</dbReference>
<dbReference type="GO" id="GO:1904547">
    <property type="term" value="P:regulation of cellular response to glucose starvation"/>
    <property type="evidence" value="ECO:0000269"/>
    <property type="project" value="ComplexPortal"/>
</dbReference>
<dbReference type="GO" id="GO:0043254">
    <property type="term" value="P:regulation of protein-containing complex assembly"/>
    <property type="evidence" value="ECO:0000316"/>
    <property type="project" value="SGD"/>
</dbReference>
<dbReference type="GO" id="GO:0007165">
    <property type="term" value="P:signal transduction"/>
    <property type="evidence" value="ECO:0000316"/>
    <property type="project" value="SGD"/>
</dbReference>
<dbReference type="CDD" id="cd02859">
    <property type="entry name" value="E_set_AMPKbeta_like_N"/>
    <property type="match status" value="1"/>
</dbReference>
<dbReference type="FunFam" id="2.60.40.10:FF:000562">
    <property type="entry name" value="Snf1 kinase complex beta-subunit Gal83"/>
    <property type="match status" value="1"/>
</dbReference>
<dbReference type="Gene3D" id="6.20.250.60">
    <property type="match status" value="1"/>
</dbReference>
<dbReference type="Gene3D" id="2.60.40.10">
    <property type="entry name" value="Immunoglobulins"/>
    <property type="match status" value="1"/>
</dbReference>
<dbReference type="InterPro" id="IPR032640">
    <property type="entry name" value="AMPK1_CBM"/>
</dbReference>
<dbReference type="InterPro" id="IPR006828">
    <property type="entry name" value="ASC_dom"/>
</dbReference>
<dbReference type="InterPro" id="IPR037256">
    <property type="entry name" value="ASC_dom_sf"/>
</dbReference>
<dbReference type="InterPro" id="IPR050827">
    <property type="entry name" value="CRP1_MDG1_kinase"/>
</dbReference>
<dbReference type="InterPro" id="IPR013783">
    <property type="entry name" value="Ig-like_fold"/>
</dbReference>
<dbReference type="InterPro" id="IPR014756">
    <property type="entry name" value="Ig_E-set"/>
</dbReference>
<dbReference type="PANTHER" id="PTHR10343">
    <property type="entry name" value="5'-AMP-ACTIVATED PROTEIN KINASE , BETA SUBUNIT"/>
    <property type="match status" value="1"/>
</dbReference>
<dbReference type="PANTHER" id="PTHR10343:SF84">
    <property type="entry name" value="5'-AMP-ACTIVATED PROTEIN KINASE SUBUNIT BETA-1"/>
    <property type="match status" value="1"/>
</dbReference>
<dbReference type="Pfam" id="PF16561">
    <property type="entry name" value="AMPK1_CBM"/>
    <property type="match status" value="1"/>
</dbReference>
<dbReference type="Pfam" id="PF04739">
    <property type="entry name" value="AMPKBI"/>
    <property type="match status" value="1"/>
</dbReference>
<dbReference type="SMART" id="SM01010">
    <property type="entry name" value="AMPKBI"/>
    <property type="match status" value="1"/>
</dbReference>
<dbReference type="SUPFAM" id="SSF160219">
    <property type="entry name" value="AMPKBI-like"/>
    <property type="match status" value="1"/>
</dbReference>
<dbReference type="SUPFAM" id="SSF81296">
    <property type="entry name" value="E set domains"/>
    <property type="match status" value="1"/>
</dbReference>
<protein>
    <recommendedName>
        <fullName>SNF1 protein kinase subunit beta-2</fullName>
    </recommendedName>
    <alternativeName>
        <fullName>Protein SPM2</fullName>
    </alternativeName>
    <alternativeName>
        <fullName>SNF1-interacting protein 2</fullName>
    </alternativeName>
</protein>
<organism>
    <name type="scientific">Saccharomyces cerevisiae (strain ATCC 204508 / S288c)</name>
    <name type="common">Baker's yeast</name>
    <dbReference type="NCBI Taxonomy" id="559292"/>
    <lineage>
        <taxon>Eukaryota</taxon>
        <taxon>Fungi</taxon>
        <taxon>Dikarya</taxon>
        <taxon>Ascomycota</taxon>
        <taxon>Saccharomycotina</taxon>
        <taxon>Saccharomycetes</taxon>
        <taxon>Saccharomycetales</taxon>
        <taxon>Saccharomycetaceae</taxon>
        <taxon>Saccharomyces</taxon>
    </lineage>
</organism>
<gene>
    <name type="primary">SIP2</name>
    <name type="synonym">SPM2</name>
    <name type="ordered locus">YGL208W</name>
    <name type="ORF">G1155</name>
</gene>
<name>SIP2_YEAST</name>
<feature type="initiator methionine" description="Removed">
    <location>
        <position position="1"/>
    </location>
</feature>
<feature type="chain" id="PRO_0000204375" description="SNF1 protein kinase subunit beta-2">
    <location>
        <begin position="2"/>
        <end position="415"/>
    </location>
</feature>
<feature type="region of interest" description="Disordered" evidence="1">
    <location>
        <begin position="1"/>
        <end position="43"/>
    </location>
</feature>
<feature type="region of interest" description="Disordered" evidence="1">
    <location>
        <begin position="55"/>
        <end position="158"/>
    </location>
</feature>
<feature type="region of interest" description="Kinase-interacting sequence (KIS); required for interaction with SNF1">
    <location>
        <begin position="154"/>
        <end position="335"/>
    </location>
</feature>
<feature type="region of interest" description="Disordered" evidence="1">
    <location>
        <begin position="249"/>
        <end position="276"/>
    </location>
</feature>
<feature type="region of interest" description="Association with SNF1 kinase complex (ASC) domain; required for interaction with SNF4" evidence="10">
    <location>
        <begin position="336"/>
        <end position="415"/>
    </location>
</feature>
<feature type="compositionally biased region" description="Basic residues" evidence="1">
    <location>
        <begin position="9"/>
        <end position="19"/>
    </location>
</feature>
<feature type="compositionally biased region" description="Polar residues" evidence="1">
    <location>
        <begin position="55"/>
        <end position="69"/>
    </location>
</feature>
<feature type="compositionally biased region" description="Basic and acidic residues" evidence="1">
    <location>
        <begin position="122"/>
        <end position="150"/>
    </location>
</feature>
<feature type="compositionally biased region" description="Basic and acidic residues" evidence="1">
    <location>
        <begin position="249"/>
        <end position="264"/>
    </location>
</feature>
<feature type="modified residue" description="Phosphoserine" evidence="12">
    <location>
        <position position="66"/>
    </location>
</feature>
<feature type="modified residue" description="Phosphoserine" evidence="12">
    <location>
        <position position="298"/>
    </location>
</feature>
<feature type="lipid moiety-binding region" description="N-myristoyl glycine" evidence="5">
    <location>
        <position position="2"/>
    </location>
</feature>
<feature type="mutagenesis site" description="Changes protein distribution from the plasma membrane to the cytoplasm and nucleus and alters the cellular life span." evidence="5">
    <original>G</original>
    <variation>A</variation>
    <location>
        <position position="2"/>
    </location>
</feature>
<feature type="strand" evidence="13">
    <location>
        <begin position="164"/>
        <end position="170"/>
    </location>
</feature>
<feature type="strand" evidence="13">
    <location>
        <begin position="177"/>
        <end position="181"/>
    </location>
</feature>
<feature type="helix" evidence="13">
    <location>
        <begin position="182"/>
        <end position="184"/>
    </location>
</feature>
<feature type="strand" evidence="13">
    <location>
        <begin position="196"/>
        <end position="198"/>
    </location>
</feature>
<feature type="strand" evidence="13">
    <location>
        <begin position="202"/>
        <end position="208"/>
    </location>
</feature>
<feature type="strand" evidence="13">
    <location>
        <begin position="210"/>
        <end position="219"/>
    </location>
</feature>
<feature type="strand" evidence="13">
    <location>
        <begin position="222"/>
        <end position="224"/>
    </location>
</feature>
<feature type="strand" evidence="13">
    <location>
        <begin position="231"/>
        <end position="233"/>
    </location>
</feature>
<feature type="strand" evidence="13">
    <location>
        <begin position="240"/>
        <end position="245"/>
    </location>
</feature>
<feature type="strand" evidence="14">
    <location>
        <begin position="305"/>
        <end position="307"/>
    </location>
</feature>
<feature type="helix" evidence="14">
    <location>
        <begin position="311"/>
        <end position="313"/>
    </location>
</feature>
<feature type="helix" evidence="14">
    <location>
        <begin position="316"/>
        <end position="324"/>
    </location>
</feature>
<feature type="helix" evidence="14">
    <location>
        <begin position="336"/>
        <end position="338"/>
    </location>
</feature>
<feature type="helix" evidence="14">
    <location>
        <begin position="345"/>
        <end position="347"/>
    </location>
</feature>
<feature type="helix" evidence="14">
    <location>
        <begin position="349"/>
        <end position="365"/>
    </location>
</feature>
<feature type="helix" evidence="14">
    <location>
        <begin position="375"/>
        <end position="377"/>
    </location>
</feature>
<feature type="strand" evidence="15">
    <location>
        <begin position="380"/>
        <end position="383"/>
    </location>
</feature>
<feature type="strand" evidence="14">
    <location>
        <begin position="390"/>
        <end position="399"/>
    </location>
</feature>
<feature type="strand" evidence="14">
    <location>
        <begin position="402"/>
        <end position="411"/>
    </location>
</feature>